<dbReference type="EC" id="2.1.1.397" evidence="2 3"/>
<dbReference type="EMBL" id="OM304297">
    <property type="protein sequence ID" value="UQZ09628.1"/>
    <property type="molecule type" value="mRNA"/>
</dbReference>
<dbReference type="SMR" id="P0DO86"/>
<dbReference type="KEGG" id="ag:UQZ09628"/>
<dbReference type="GO" id="GO:0008171">
    <property type="term" value="F:O-methyltransferase activity"/>
    <property type="evidence" value="ECO:0000314"/>
    <property type="project" value="UniProtKB"/>
</dbReference>
<dbReference type="GO" id="GO:0046983">
    <property type="term" value="F:protein dimerization activity"/>
    <property type="evidence" value="ECO:0007669"/>
    <property type="project" value="InterPro"/>
</dbReference>
<dbReference type="GO" id="GO:0009821">
    <property type="term" value="P:alkaloid biosynthetic process"/>
    <property type="evidence" value="ECO:0000314"/>
    <property type="project" value="UniProtKB"/>
</dbReference>
<dbReference type="GO" id="GO:0032259">
    <property type="term" value="P:methylation"/>
    <property type="evidence" value="ECO:0007669"/>
    <property type="project" value="UniProtKB-KW"/>
</dbReference>
<dbReference type="CDD" id="cd02440">
    <property type="entry name" value="AdoMet_MTases"/>
    <property type="match status" value="1"/>
</dbReference>
<dbReference type="FunFam" id="3.40.50.150:FF:000057">
    <property type="entry name" value="O-methyltransferase ZRP4"/>
    <property type="match status" value="1"/>
</dbReference>
<dbReference type="Gene3D" id="3.40.50.150">
    <property type="entry name" value="Vaccinia Virus protein VP39"/>
    <property type="match status" value="1"/>
</dbReference>
<dbReference type="Gene3D" id="1.10.10.10">
    <property type="entry name" value="Winged helix-like DNA-binding domain superfamily/Winged helix DNA-binding domain"/>
    <property type="match status" value="1"/>
</dbReference>
<dbReference type="InterPro" id="IPR016461">
    <property type="entry name" value="COMT-like"/>
</dbReference>
<dbReference type="InterPro" id="IPR001077">
    <property type="entry name" value="O_MeTrfase_dom"/>
</dbReference>
<dbReference type="InterPro" id="IPR012967">
    <property type="entry name" value="Plant_O-MeTrfase_dimerisation"/>
</dbReference>
<dbReference type="InterPro" id="IPR029063">
    <property type="entry name" value="SAM-dependent_MTases_sf"/>
</dbReference>
<dbReference type="InterPro" id="IPR036388">
    <property type="entry name" value="WH-like_DNA-bd_sf"/>
</dbReference>
<dbReference type="InterPro" id="IPR036390">
    <property type="entry name" value="WH_DNA-bd_sf"/>
</dbReference>
<dbReference type="PANTHER" id="PTHR11746">
    <property type="entry name" value="O-METHYLTRANSFERASE"/>
    <property type="match status" value="1"/>
</dbReference>
<dbReference type="Pfam" id="PF08100">
    <property type="entry name" value="Dimerisation"/>
    <property type="match status" value="1"/>
</dbReference>
<dbReference type="Pfam" id="PF00891">
    <property type="entry name" value="Methyltransf_2"/>
    <property type="match status" value="1"/>
</dbReference>
<dbReference type="PIRSF" id="PIRSF005739">
    <property type="entry name" value="O-mtase"/>
    <property type="match status" value="1"/>
</dbReference>
<dbReference type="SUPFAM" id="SSF53335">
    <property type="entry name" value="S-adenosyl-L-methionine-dependent methyltransferases"/>
    <property type="match status" value="1"/>
</dbReference>
<dbReference type="SUPFAM" id="SSF46785">
    <property type="entry name" value="Winged helix' DNA-binding domain"/>
    <property type="match status" value="1"/>
</dbReference>
<dbReference type="PROSITE" id="PS51683">
    <property type="entry name" value="SAM_OMT_II"/>
    <property type="match status" value="1"/>
</dbReference>
<evidence type="ECO:0000250" key="1">
    <source>
        <dbReference type="UniProtKB" id="O24529"/>
    </source>
</evidence>
<evidence type="ECO:0000255" key="2">
    <source>
        <dbReference type="PROSITE-ProRule" id="PRU01020"/>
    </source>
</evidence>
<evidence type="ECO:0000269" key="3">
    <source>
    </source>
</evidence>
<evidence type="ECO:0000303" key="4">
    <source>
    </source>
</evidence>
<name>OMT_STRNX</name>
<accession>P0DO86</accession>
<feature type="chain" id="PRO_0000461126" description="Strychnine O-methyltransferase">
    <location>
        <begin position="1"/>
        <end position="363"/>
    </location>
</feature>
<feature type="active site" description="Proton acceptor" evidence="2">
    <location>
        <position position="267"/>
    </location>
</feature>
<feature type="binding site" evidence="1">
    <location>
        <position position="204"/>
    </location>
    <ligand>
        <name>S-adenosyl-L-methionine</name>
        <dbReference type="ChEBI" id="CHEBI:59789"/>
    </ligand>
</feature>
<feature type="binding site" evidence="2">
    <location>
        <position position="227"/>
    </location>
    <ligand>
        <name>S-adenosyl-L-methionine</name>
        <dbReference type="ChEBI" id="CHEBI:59789"/>
    </ligand>
</feature>
<feature type="binding site" evidence="1">
    <location>
        <position position="249"/>
    </location>
    <ligand>
        <name>S-adenosyl-L-methionine</name>
        <dbReference type="ChEBI" id="CHEBI:59789"/>
    </ligand>
</feature>
<feature type="binding site" evidence="1">
    <location>
        <position position="250"/>
    </location>
    <ligand>
        <name>S-adenosyl-L-methionine</name>
        <dbReference type="ChEBI" id="CHEBI:59789"/>
    </ligand>
</feature>
<feature type="binding site" evidence="1">
    <location>
        <position position="263"/>
    </location>
    <ligand>
        <name>S-adenosyl-L-methionine</name>
        <dbReference type="ChEBI" id="CHEBI:59789"/>
    </ligand>
</feature>
<gene>
    <name evidence="4" type="primary">OMT</name>
</gene>
<sequence length="363" mass="40199">MAMVLENSSAELLRALAHLSNKRGNFKDGAALKCAVELGIPDVIQKHGKPAMTLSELTAALPIKQSKAHCINRIMRVLVNAGFFVEQRSGDGKRDDEEESYALTPACRLLLKDEPLNARAHVLFTLDPAEMVALGSLSEWLQDDYPTAFETANGKNYWDYIAERPARNKLFNEALAVDSRLIATVLISEFKFVFEGLTSLVDVGGGTGTIARAIAETFPNMKCIVLDLQQVVEDADLEGTENLEFVAGDMFEKIPNANAILLKMVLHDWSDEDCVRILKNCKRVIPEKEKGGKIILIELVLGGQNKDHVTVEAEICMDMEMLASFGGKERTEKEWAKLFQDAGLSGYKVFSNLDSRCVIEVYP</sequence>
<comment type="function">
    <text evidence="3">O-methyltransferase involved in the biosynthesis of curare monoterpene indole alkaloids (MIAs), natural products such as strychnine, a neurotoxic compound used as a pesticide to control rodents, and its pharmacologically active derivatives, including brucine, used to regulate blood pressure (PubMed:35794473). Curare alkaloids act as animal glycine receptor antagonists (PubMed:35794473). Catalyzes the conversion of 10-OH strychnine to beta-colubrine, and of 11-deMe brucine to brucine (PubMed:35794473).</text>
</comment>
<comment type="catalytic activity">
    <reaction evidence="3">
        <text>10-hydroxystrychnine + S-adenosyl-L-methionine = beta-colubrine + S-adenosyl-L-homocysteine + H(+)</text>
        <dbReference type="Rhea" id="RHEA:80935"/>
        <dbReference type="ChEBI" id="CHEBI:15378"/>
        <dbReference type="ChEBI" id="CHEBI:57856"/>
        <dbReference type="ChEBI" id="CHEBI:59789"/>
        <dbReference type="ChEBI" id="CHEBI:231754"/>
        <dbReference type="ChEBI" id="CHEBI:231755"/>
        <dbReference type="EC" id="2.1.1.397"/>
    </reaction>
    <physiologicalReaction direction="left-to-right" evidence="3">
        <dbReference type="Rhea" id="RHEA:80936"/>
    </physiologicalReaction>
</comment>
<comment type="catalytic activity">
    <reaction evidence="3">
        <text>11-demethylbrucine + S-adenosyl-L-methionine = brucine + S-adenosyl-L-homocysteine + H(+)</text>
        <dbReference type="Rhea" id="RHEA:80943"/>
        <dbReference type="ChEBI" id="CHEBI:15378"/>
        <dbReference type="ChEBI" id="CHEBI:57856"/>
        <dbReference type="ChEBI" id="CHEBI:59789"/>
        <dbReference type="ChEBI" id="CHEBI:231756"/>
        <dbReference type="ChEBI" id="CHEBI:231757"/>
        <dbReference type="EC" id="2.1.1.397"/>
    </reaction>
    <physiologicalReaction direction="left-to-right" evidence="3">
        <dbReference type="Rhea" id="RHEA:80944"/>
    </physiologicalReaction>
</comment>
<comment type="pathway">
    <text evidence="3">Alkaloid biosynthesis.</text>
</comment>
<comment type="similarity">
    <text evidence="2">Belongs to the class I-like SAM-binding methyltransferase superfamily. Cation-independent O-methyltransferase family.</text>
</comment>
<keyword id="KW-0489">Methyltransferase</keyword>
<keyword id="KW-0949">S-adenosyl-L-methionine</keyword>
<keyword id="KW-0808">Transferase</keyword>
<reference key="1">
    <citation type="journal article" date="2022" name="Nature">
        <title>Biosynthesis of strychnine.</title>
        <authorList>
            <person name="Hong B."/>
            <person name="Grzech D."/>
            <person name="Caputi L."/>
            <person name="Sonawane P."/>
            <person name="Lopez C.E.R."/>
            <person name="Kamileen M.O."/>
            <person name="Hernandez Lozada N.J."/>
            <person name="Grabe V."/>
            <person name="O'Connor S.E."/>
        </authorList>
    </citation>
    <scope>NUCLEOTIDE SEQUENCE [MRNA]</scope>
    <scope>FUNCTION</scope>
    <scope>CATALYTIC ACTIVITY</scope>
    <scope>PATHWAY</scope>
</reference>
<proteinExistence type="evidence at protein level"/>
<protein>
    <recommendedName>
        <fullName evidence="4">Strychnine O-methyltransferase</fullName>
        <shortName evidence="4">SnvOMT</shortName>
        <ecNumber evidence="2 3">2.1.1.397</ecNumber>
    </recommendedName>
</protein>
<organism>
    <name type="scientific">Strychnos nux-vomica</name>
    <name type="common">Poison nut</name>
    <name type="synonym">Strychnine tree</name>
    <dbReference type="NCBI Taxonomy" id="28545"/>
    <lineage>
        <taxon>Eukaryota</taxon>
        <taxon>Viridiplantae</taxon>
        <taxon>Streptophyta</taxon>
        <taxon>Embryophyta</taxon>
        <taxon>Tracheophyta</taxon>
        <taxon>Spermatophyta</taxon>
        <taxon>Magnoliopsida</taxon>
        <taxon>eudicotyledons</taxon>
        <taxon>Gunneridae</taxon>
        <taxon>Pentapetalae</taxon>
        <taxon>asterids</taxon>
        <taxon>lamiids</taxon>
        <taxon>Gentianales</taxon>
        <taxon>Loganiaceae</taxon>
        <taxon>Strychnos</taxon>
    </lineage>
</organism>